<evidence type="ECO:0000255" key="1">
    <source>
        <dbReference type="HAMAP-Rule" id="MF_00270"/>
    </source>
</evidence>
<evidence type="ECO:0000305" key="2"/>
<comment type="function">
    <text evidence="1">Binds as a heterodimer with protein bS6 to the central domain of the 16S rRNA, where it helps stabilize the platform of the 30S subunit.</text>
</comment>
<comment type="subunit">
    <text evidence="1">Part of the 30S ribosomal subunit. Forms a tight heterodimer with protein bS6.</text>
</comment>
<comment type="similarity">
    <text evidence="1">Belongs to the bacterial ribosomal protein bS18 family.</text>
</comment>
<dbReference type="EMBL" id="CP000673">
    <property type="protein sequence ID" value="EDK35884.1"/>
    <property type="molecule type" value="Genomic_DNA"/>
</dbReference>
<dbReference type="RefSeq" id="WP_012104221.1">
    <property type="nucleotide sequence ID" value="NC_009706.1"/>
</dbReference>
<dbReference type="SMR" id="A5N438"/>
<dbReference type="STRING" id="431943.CKL_3908"/>
<dbReference type="KEGG" id="ckl:CKL_3908"/>
<dbReference type="eggNOG" id="COG0238">
    <property type="taxonomic scope" value="Bacteria"/>
</dbReference>
<dbReference type="HOGENOM" id="CLU_148710_2_2_9"/>
<dbReference type="Proteomes" id="UP000002411">
    <property type="component" value="Chromosome"/>
</dbReference>
<dbReference type="GO" id="GO:0022627">
    <property type="term" value="C:cytosolic small ribosomal subunit"/>
    <property type="evidence" value="ECO:0007669"/>
    <property type="project" value="TreeGrafter"/>
</dbReference>
<dbReference type="GO" id="GO:0070181">
    <property type="term" value="F:small ribosomal subunit rRNA binding"/>
    <property type="evidence" value="ECO:0007669"/>
    <property type="project" value="TreeGrafter"/>
</dbReference>
<dbReference type="GO" id="GO:0003735">
    <property type="term" value="F:structural constituent of ribosome"/>
    <property type="evidence" value="ECO:0007669"/>
    <property type="project" value="InterPro"/>
</dbReference>
<dbReference type="GO" id="GO:0006412">
    <property type="term" value="P:translation"/>
    <property type="evidence" value="ECO:0007669"/>
    <property type="project" value="UniProtKB-UniRule"/>
</dbReference>
<dbReference type="FunFam" id="4.10.640.10:FF:000004">
    <property type="entry name" value="30S ribosomal protein S18"/>
    <property type="match status" value="1"/>
</dbReference>
<dbReference type="Gene3D" id="4.10.640.10">
    <property type="entry name" value="Ribosomal protein S18"/>
    <property type="match status" value="1"/>
</dbReference>
<dbReference type="HAMAP" id="MF_00270">
    <property type="entry name" value="Ribosomal_bS18"/>
    <property type="match status" value="1"/>
</dbReference>
<dbReference type="InterPro" id="IPR001648">
    <property type="entry name" value="Ribosomal_bS18"/>
</dbReference>
<dbReference type="InterPro" id="IPR018275">
    <property type="entry name" value="Ribosomal_bS18_CS"/>
</dbReference>
<dbReference type="InterPro" id="IPR036870">
    <property type="entry name" value="Ribosomal_bS18_sf"/>
</dbReference>
<dbReference type="NCBIfam" id="TIGR00165">
    <property type="entry name" value="S18"/>
    <property type="match status" value="1"/>
</dbReference>
<dbReference type="PANTHER" id="PTHR13479">
    <property type="entry name" value="30S RIBOSOMAL PROTEIN S18"/>
    <property type="match status" value="1"/>
</dbReference>
<dbReference type="PANTHER" id="PTHR13479:SF40">
    <property type="entry name" value="SMALL RIBOSOMAL SUBUNIT PROTEIN BS18M"/>
    <property type="match status" value="1"/>
</dbReference>
<dbReference type="Pfam" id="PF01084">
    <property type="entry name" value="Ribosomal_S18"/>
    <property type="match status" value="1"/>
</dbReference>
<dbReference type="PRINTS" id="PR00974">
    <property type="entry name" value="RIBOSOMALS18"/>
</dbReference>
<dbReference type="SUPFAM" id="SSF46911">
    <property type="entry name" value="Ribosomal protein S18"/>
    <property type="match status" value="1"/>
</dbReference>
<dbReference type="PROSITE" id="PS00057">
    <property type="entry name" value="RIBOSOMAL_S18"/>
    <property type="match status" value="1"/>
</dbReference>
<accession>A5N438</accession>
<reference key="1">
    <citation type="journal article" date="2008" name="Proc. Natl. Acad. Sci. U.S.A.">
        <title>The genome of Clostridium kluyveri, a strict anaerobe with unique metabolic features.</title>
        <authorList>
            <person name="Seedorf H."/>
            <person name="Fricke W.F."/>
            <person name="Veith B."/>
            <person name="Brueggemann H."/>
            <person name="Liesegang H."/>
            <person name="Strittmatter A."/>
            <person name="Miethke M."/>
            <person name="Buckel W."/>
            <person name="Hinderberger J."/>
            <person name="Li F."/>
            <person name="Hagemeier C."/>
            <person name="Thauer R.K."/>
            <person name="Gottschalk G."/>
        </authorList>
    </citation>
    <scope>NUCLEOTIDE SEQUENCE [LARGE SCALE GENOMIC DNA]</scope>
    <source>
        <strain>ATCC 8527 / DSM 555 / NBRC 12016 / NCIMB 10680 / K1</strain>
    </source>
</reference>
<protein>
    <recommendedName>
        <fullName evidence="1">Small ribosomal subunit protein bS18</fullName>
    </recommendedName>
    <alternativeName>
        <fullName evidence="2">30S ribosomal protein S18</fullName>
    </alternativeName>
</protein>
<keyword id="KW-1185">Reference proteome</keyword>
<keyword id="KW-0687">Ribonucleoprotein</keyword>
<keyword id="KW-0689">Ribosomal protein</keyword>
<keyword id="KW-0694">RNA-binding</keyword>
<keyword id="KW-0699">rRNA-binding</keyword>
<organism>
    <name type="scientific">Clostridium kluyveri (strain ATCC 8527 / DSM 555 / NBRC 12016 / NCIMB 10680 / K1)</name>
    <dbReference type="NCBI Taxonomy" id="431943"/>
    <lineage>
        <taxon>Bacteria</taxon>
        <taxon>Bacillati</taxon>
        <taxon>Bacillota</taxon>
        <taxon>Clostridia</taxon>
        <taxon>Eubacteriales</taxon>
        <taxon>Clostridiaceae</taxon>
        <taxon>Clostridium</taxon>
    </lineage>
</organism>
<name>RS18_CLOK5</name>
<gene>
    <name evidence="1" type="primary">rpsR</name>
    <name type="ordered locus">CKL_3908</name>
</gene>
<proteinExistence type="inferred from homology"/>
<feature type="chain" id="PRO_1000078697" description="Small ribosomal subunit protein bS18">
    <location>
        <begin position="1"/>
        <end position="84"/>
    </location>
</feature>
<sequence>MANREGGRRNSGKLRRAKRKVCAFCMDKSEFIDYKDINKLRKYVTERGKILPRRISGNCAKHQRELTRAIKRARNIALLPFTTE</sequence>